<evidence type="ECO:0000255" key="1"/>
<evidence type="ECO:0000255" key="2">
    <source>
        <dbReference type="PROSITE-ProRule" id="PRU01203"/>
    </source>
</evidence>
<evidence type="ECO:0000269" key="3">
    <source>
    </source>
</evidence>
<evidence type="ECO:0000269" key="4">
    <source>
    </source>
</evidence>
<evidence type="ECO:0000269" key="5">
    <source>
    </source>
</evidence>
<evidence type="ECO:0000269" key="6">
    <source>
    </source>
</evidence>
<evidence type="ECO:0000269" key="7">
    <source>
    </source>
</evidence>
<evidence type="ECO:0000269" key="8">
    <source>
    </source>
</evidence>
<evidence type="ECO:0000269" key="9">
    <source>
    </source>
</evidence>
<evidence type="ECO:0000269" key="10">
    <source>
    </source>
</evidence>
<evidence type="ECO:0000305" key="11"/>
<evidence type="ECO:0007829" key="12">
    <source>
        <dbReference type="PDB" id="1A62"/>
    </source>
</evidence>
<evidence type="ECO:0007829" key="13">
    <source>
        <dbReference type="PDB" id="1A63"/>
    </source>
</evidence>
<evidence type="ECO:0007829" key="14">
    <source>
        <dbReference type="PDB" id="1A8V"/>
    </source>
</evidence>
<evidence type="ECO:0007829" key="15">
    <source>
        <dbReference type="PDB" id="1XPO"/>
    </source>
</evidence>
<evidence type="ECO:0007829" key="16">
    <source>
        <dbReference type="PDB" id="3ICE"/>
    </source>
</evidence>
<evidence type="ECO:0007829" key="17">
    <source>
        <dbReference type="PDB" id="5JJI"/>
    </source>
</evidence>
<evidence type="ECO:0007829" key="18">
    <source>
        <dbReference type="PDB" id="6WA8"/>
    </source>
</evidence>
<evidence type="ECO:0007829" key="19">
    <source>
        <dbReference type="PDB" id="8PEY"/>
    </source>
</evidence>
<evidence type="ECO:0007829" key="20">
    <source>
        <dbReference type="PDB" id="8PTG"/>
    </source>
</evidence>
<evidence type="ECO:0007829" key="21">
    <source>
        <dbReference type="PDB" id="8PTM"/>
    </source>
</evidence>
<evidence type="ECO:0007829" key="22">
    <source>
        <dbReference type="PDB" id="8PTO"/>
    </source>
</evidence>
<evidence type="ECO:0007829" key="23">
    <source>
        <dbReference type="PDB" id="8Q3N"/>
    </source>
</evidence>
<evidence type="ECO:0007829" key="24">
    <source>
        <dbReference type="PDB" id="9GCU"/>
    </source>
</evidence>
<comment type="function">
    <text evidence="6 8">Facilitates transcription termination by a mechanism that involves Rho binding to the nascent RNA, activation of Rho's RNA-dependent ATPase activity, and release of the mRNA from the DNA template. RNA-dependent NTPase which utilizes all four ribonucleoside triphosphates as substrates.</text>
</comment>
<comment type="activity regulation">
    <text evidence="9">ATPase activity is inhibited by bicyclomycin and dihydrobicyclomycin.</text>
</comment>
<comment type="biophysicochemical properties">
    <kinetics>
        <KM evidence="9">11 uM for ATP</KM>
    </kinetics>
</comment>
<comment type="subunit">
    <text evidence="3 4 5 7 10">Homohexamer. The homohexamer assembles into an open ring structure.</text>
</comment>
<comment type="interaction">
    <interactant intactId="EBI-545468">
        <id>P0AG30</id>
    </interactant>
    <interactant intactId="EBI-557080">
        <id>P0AES0</id>
        <label>gss</label>
    </interactant>
    <organismsDiffer>false</organismsDiffer>
    <experiments>5</experiments>
</comment>
<comment type="interaction">
    <interactant intactId="EBI-545468">
        <id>P0AG30</id>
    </interactant>
    <interactant intactId="EBI-547637">
        <id>P0A6X3</id>
        <label>hfq</label>
    </interactant>
    <organismsDiffer>false</organismsDiffer>
    <experiments>5</experiments>
</comment>
<comment type="interaction">
    <interactant intactId="EBI-545468">
        <id>P0AG30</id>
    </interactant>
    <interactant intactId="EBI-369628">
        <id>P0AFG0</id>
        <label>nusG</label>
    </interactant>
    <organismsDiffer>false</organismsDiffer>
    <experiments>8</experiments>
</comment>
<comment type="interaction">
    <interactant intactId="EBI-545468">
        <id>P0AG30</id>
    </interactant>
    <interactant intactId="EBI-545468">
        <id>P0AG30</id>
        <label>rho</label>
    </interactant>
    <organismsDiffer>false</organismsDiffer>
    <experiments>4</experiments>
</comment>
<comment type="interaction">
    <interactant intactId="EBI-545468">
        <id>P0AG30</id>
    </interactant>
    <interactant intactId="EBI-1114609">
        <id>P0AFW8</id>
        <label>rof</label>
    </interactant>
    <organismsDiffer>false</organismsDiffer>
    <experiments>2</experiments>
</comment>
<comment type="interaction">
    <interactant intactId="EBI-545468">
        <id>P0AG30</id>
    </interactant>
    <interactant intactId="EBI-301077">
        <id>P0CE47</id>
        <label>tufA</label>
    </interactant>
    <organismsDiffer>false</organismsDiffer>
    <experiments>2</experiments>
</comment>
<comment type="interaction">
    <interactant intactId="EBI-545468">
        <id>P0AG30</id>
    </interactant>
    <interactant intactId="EBI-543346">
        <id>P0AGK4</id>
        <label>yhbY</label>
    </interactant>
    <organismsDiffer>false</organismsDiffer>
    <experiments>3</experiments>
</comment>
<comment type="domain">
    <text>Each subunit has two RNA-binding sites, one at the surface of the hexameric ring, and one at the center of the open ring structure, where RNA helicase activity is thought to take place.</text>
</comment>
<comment type="similarity">
    <text evidence="11">Belongs to the Rho family.</text>
</comment>
<sequence>MNLTELKNTPVSELITLGENMGLENLARMRKQDIIFAILKQHAKSGEDIFGDGVLEILQDGFGFLRSADSSYLAGPDDIYVSPSQIRRFNLRTGDTISGKIRPPKEGERYFALLKVNEVNFDKPENARNKILFENLTPLHANSRLRMERGNGSTEDLTARVLDLASPIGRGQRGLIVAPPKAGKTMLLQNIAQSIAYNHPDCVLMVLLIDERPEEVTEMQRLVKGEVVASTFDEPASRHVQVAEMVIEKAKRLVEHKKDVIILLDSITRLARAYNTVVPASGKVLTGGVDANALHRPKRFFGAARNVEEGGSLTIIATALIDTGSKMDEVIYEEFKGTGNMELHLSRKIAEKRVFPAIDYNRSGTRKEELLTTQEELQKMWILRKIIHPMGEIDAMEFLINKLAMTKTNDDFFEMMKRS</sequence>
<reference key="1">
    <citation type="journal article" date="1983" name="Nucleic Acids Res.">
        <title>The nucleotide sequence of the rho gene of E. coli K-12.</title>
        <authorList>
            <person name="Pinkham J.L."/>
            <person name="Platt T."/>
        </authorList>
    </citation>
    <scope>NUCLEOTIDE SEQUENCE [GENOMIC DNA]</scope>
    <source>
        <strain>K12</strain>
    </source>
</reference>
<reference key="2">
    <citation type="journal article" date="1992" name="Science">
        <title>Analysis of the Escherichia coli genome: DNA sequence of the region from 84.5 to 86.5 minutes.</title>
        <authorList>
            <person name="Daniels D.L."/>
            <person name="Plunkett G. III"/>
            <person name="Burland V.D."/>
            <person name="Blattner F.R."/>
        </authorList>
    </citation>
    <scope>NUCLEOTIDE SEQUENCE [LARGE SCALE GENOMIC DNA]</scope>
    <source>
        <strain>K12 / MG1655 / ATCC 47076</strain>
    </source>
</reference>
<reference key="3">
    <citation type="journal article" date="1997" name="Science">
        <title>The complete genome sequence of Escherichia coli K-12.</title>
        <authorList>
            <person name="Blattner F.R."/>
            <person name="Plunkett G. III"/>
            <person name="Bloch C.A."/>
            <person name="Perna N.T."/>
            <person name="Burland V."/>
            <person name="Riley M."/>
            <person name="Collado-Vides J."/>
            <person name="Glasner J.D."/>
            <person name="Rode C.K."/>
            <person name="Mayhew G.F."/>
            <person name="Gregor J."/>
            <person name="Davis N.W."/>
            <person name="Kirkpatrick H.A."/>
            <person name="Goeden M.A."/>
            <person name="Rose D.J."/>
            <person name="Mau B."/>
            <person name="Shao Y."/>
        </authorList>
    </citation>
    <scope>NUCLEOTIDE SEQUENCE [LARGE SCALE GENOMIC DNA]</scope>
    <source>
        <strain>K12 / MG1655 / ATCC 47076</strain>
    </source>
</reference>
<reference key="4">
    <citation type="journal article" date="2006" name="Mol. Syst. Biol.">
        <title>Highly accurate genome sequences of Escherichia coli K-12 strains MG1655 and W3110.</title>
        <authorList>
            <person name="Hayashi K."/>
            <person name="Morooka N."/>
            <person name="Yamamoto Y."/>
            <person name="Fujita K."/>
            <person name="Isono K."/>
            <person name="Choi S."/>
            <person name="Ohtsubo E."/>
            <person name="Baba T."/>
            <person name="Wanner B.L."/>
            <person name="Mori H."/>
            <person name="Horiuchi T."/>
        </authorList>
    </citation>
    <scope>NUCLEOTIDE SEQUENCE [LARGE SCALE GENOMIC DNA]</scope>
    <source>
        <strain>K12 / W3110 / ATCC 27325 / DSM 5911</strain>
    </source>
</reference>
<reference key="5">
    <citation type="journal article" date="1986" name="J. Bacteriol.">
        <title>Autogenous regulation of the gene for transcription termination factor rho in Escherichia coli: localization and function of its attenuators.</title>
        <authorList>
            <person name="Matsumoto Y."/>
            <person name="Shigesada K."/>
            <person name="Hirano M."/>
            <person name="Imai M."/>
        </authorList>
    </citation>
    <scope>NUCLEOTIDE SEQUENCE [GENOMIC DNA] OF 1-196</scope>
</reference>
<reference key="6">
    <citation type="journal article" date="1991" name="Mol. Microbiol.">
        <title>Cloning and expression of the rfe-rff gene cluster of Escherichia coli.</title>
        <authorList>
            <person name="Ohta M."/>
            <person name="Ina K."/>
            <person name="Kusuzaki K."/>
            <person name="Kido N."/>
            <person name="Arakawa Y."/>
            <person name="Kato N."/>
        </authorList>
    </citation>
    <scope>NUCLEOTIDE SEQUENCE [GENOMIC DNA] OF 397-419</scope>
</reference>
<reference key="7">
    <citation type="journal article" date="1995" name="Gene">
        <title>The ts15 mutation of Escherichia coli alters the sequence of the C-terminal nine residues of Rho protein.</title>
        <authorList>
            <person name="Opperman T."/>
            <person name="Martinez A."/>
            <person name="Richardson J.P."/>
        </authorList>
    </citation>
    <scope>NUCLEOTIDE SEQUENCE [GENOMIC DNA] OF 405-419</scope>
</reference>
<reference key="8">
    <citation type="journal article" date="1982" name="J. Mol. Biol.">
        <title>Localization and regulation of the structural gene for transcription-termination factor rho of Escherichia coli.</title>
        <authorList>
            <person name="Brown S."/>
            <person name="Albrechtsen B."/>
            <person name="Pedersen S."/>
            <person name="Klemm P."/>
        </authorList>
    </citation>
    <scope>PROTEIN SEQUENCE OF 1-13</scope>
    <source>
        <strain>K12</strain>
    </source>
</reference>
<reference key="9">
    <citation type="journal article" date="1997" name="Electrophoresis">
        <title>Comparing the predicted and observed properties of proteins encoded in the genome of Escherichia coli K-12.</title>
        <authorList>
            <person name="Link A.J."/>
            <person name="Robison K."/>
            <person name="Church G.M."/>
        </authorList>
    </citation>
    <scope>PROTEIN SEQUENCE OF 1-12</scope>
    <source>
        <strain>K12 / EMG2</strain>
    </source>
</reference>
<reference key="10">
    <citation type="journal article" date="1991" name="J. Biol. Chem.">
        <title>Mutations in an RNP1 consensus sequence of Rho protein reduce RNA binding affinity but facilitate helicase turnover.</title>
        <authorList>
            <person name="Brennan C.A."/>
            <person name="Platt T."/>
        </authorList>
    </citation>
    <scope>FUNCTION</scope>
    <scope>RNA-BINDING DOMAIN</scope>
</reference>
<reference key="11">
    <citation type="journal article" date="1988" name="J. Biol. Chem.">
        <title>Site-directed alterations in the ATP-binding domain of rho protein affect its activities as a termination factor.</title>
        <authorList>
            <person name="Dombroski A.J."/>
            <person name="Brennan C.A."/>
            <person name="Spear P."/>
            <person name="Platt T."/>
        </authorList>
    </citation>
    <scope>FUNCTION</scope>
    <scope>MUTAGENESIS</scope>
</reference>
<reference key="12">
    <citation type="journal article" date="1995" name="Arch. Biochem. Biophys.">
        <title>Bicyclomycin and dihydrobicyclomycin inhibition kinetics of Escherichia coli rho-dependent transcription termination factor ATPase activity.</title>
        <authorList>
            <person name="Park H.G."/>
            <person name="Zhang X."/>
            <person name="Moon H.S."/>
            <person name="Zwiefka A."/>
            <person name="Cox K."/>
            <person name="Gaskell S.J."/>
            <person name="Widger W.R."/>
            <person name="Kohn H."/>
        </authorList>
    </citation>
    <scope>ACTIVITY REGULATION</scope>
    <scope>BIOPHYSICOCHEMICAL PROPERTIES</scope>
    <scope>MUTAGENESIS OF CYS-202</scope>
</reference>
<reference key="13">
    <citation type="journal article" date="1997" name="Electrophoresis">
        <title>Escherichia coli proteome analysis using the gene-protein database.</title>
        <authorList>
            <person name="VanBogelen R.A."/>
            <person name="Abshire K.Z."/>
            <person name="Moldover B."/>
            <person name="Olson E.R."/>
            <person name="Neidhardt F.C."/>
        </authorList>
    </citation>
    <scope>IDENTIFICATION BY 2D-GEL</scope>
</reference>
<reference key="14">
    <citation type="journal article" date="1996" name="J. Biomol. NMR">
        <title>1H, 15N and 13C resonance assignments and secondary structure determination of the RNA-binding domain of E.coli rho protein.</title>
        <authorList>
            <person name="Briercheck D.M."/>
            <person name="Allison T.J."/>
            <person name="Richardson J.P."/>
            <person name="Ellena J.F."/>
            <person name="Wood T.C."/>
            <person name="Rule S.G."/>
        </authorList>
    </citation>
    <scope>STRUCTURE BY NMR OF 1-130</scope>
</reference>
<reference key="15">
    <citation type="journal article" date="1998" name="Nat. Struct. Biol.">
        <title>The NMR structure of the RNA binding domain of E. coli rho factor suggests possible RNA-protein interactions.</title>
        <authorList>
            <person name="Briercheck D.M."/>
            <person name="Allison T.J."/>
            <person name="Wood T.C."/>
            <person name="Richardson J.P."/>
            <person name="Rule G.S."/>
        </authorList>
    </citation>
    <scope>STRUCTURE BY NMR OF 1-130</scope>
</reference>
<reference key="16">
    <citation type="journal article" date="1998" name="Nat. Struct. Biol.">
        <title>Crystal structure of the RNA-binding domain from transcription termination factor rho.</title>
        <authorList>
            <person name="Allison T.J."/>
            <person name="Wood T.C."/>
            <person name="Briercheck D.M."/>
            <person name="Rastinejad F."/>
            <person name="Richardson J.P."/>
            <person name="Rule G.S."/>
        </authorList>
    </citation>
    <scope>X-RAY CRYSTALLOGRAPHY (1.55 ANGSTROMS) OF 1-130</scope>
    <scope>SUBUNIT</scope>
</reference>
<reference key="17">
    <citation type="journal article" date="1999" name="Mol. Cell">
        <title>The structural basis for terminator recognition by the Rho transcription termination factor.</title>
        <authorList>
            <person name="Bogden C.E."/>
            <person name="Fass D."/>
            <person name="Bergman N."/>
            <person name="Nichols M.D."/>
            <person name="Berger J.M."/>
        </authorList>
    </citation>
    <scope>X-RAY CRYSTALLOGRAPHY (2.0 ANGSTROMS) OF 1-118 IN COMPLEX WITH POLY-C OLIGONUCLEOTIDE</scope>
    <scope>INTERACTION WITH TARGET RNA</scope>
    <scope>SUBUNIT</scope>
</reference>
<reference key="18">
    <citation type="journal article" date="2003" name="Cell">
        <title>Structure of the Rho transcription terminator: mechanism of mRNA recognition and helicase loading.</title>
        <authorList>
            <person name="Skordalakes E."/>
            <person name="Berger J.M."/>
        </authorList>
    </citation>
    <scope>X-RAY CRYSTALLOGRAPHY (3.0 ANGSTROMS) IN COMPLEX WITH AMPPNP AND OLIGONUCLEOTIDE</scope>
    <scope>SUBUNIT</scope>
</reference>
<reference key="19">
    <citation type="journal article" date="2005" name="Structure">
        <title>Structural mechanism of inhibition of the Rho transcription termination factor by the antibiotic bicyclomycin.</title>
        <authorList>
            <person name="Skordalakes E."/>
            <person name="Brogan A.P."/>
            <person name="Park B.S."/>
            <person name="Kohn H."/>
            <person name="Berger J.M."/>
        </authorList>
    </citation>
    <scope>X-RAY CRYSTALLOGRAPHY (3.05 ANGSTROMS) IN COMPLEX WITH INHIBITOR BICYCLOMYCIN; MAGNESIUM-ATP ANALOG AND OLIGO-U OLIGONUCLEOTIDE</scope>
    <scope>SUBUNIT</scope>
</reference>
<reference key="20">
    <citation type="journal article" date="2009" name="Cell">
        <title>Running in reverse: the structural basis for translocation polarity in hexameric helicases.</title>
        <authorList>
            <person name="Thomsen N.D."/>
            <person name="Berger J.M."/>
        </authorList>
    </citation>
    <scope>X-RAY CRYSTALLOGRAPHY (2.8 ANGSTROMS) IN COMPLEX WITH POLY-U OLIGONUCLEOTIDE; ADP; MAGNESIUM AND BERYLLIUM IONS</scope>
    <scope>SUBUNIT</scope>
</reference>
<keyword id="KW-0002">3D-structure</keyword>
<keyword id="KW-0067">ATP-binding</keyword>
<keyword id="KW-0903">Direct protein sequencing</keyword>
<keyword id="KW-0347">Helicase</keyword>
<keyword id="KW-0378">Hydrolase</keyword>
<keyword id="KW-0547">Nucleotide-binding</keyword>
<keyword id="KW-1185">Reference proteome</keyword>
<keyword id="KW-0694">RNA-binding</keyword>
<keyword id="KW-0804">Transcription</keyword>
<keyword id="KW-0805">Transcription regulation</keyword>
<keyword id="KW-0806">Transcription termination</keyword>
<gene>
    <name type="primary">rho</name>
    <name type="synonym">nitA</name>
    <name type="synonym">psuA</name>
    <name type="synonym">rnsC</name>
    <name type="synonym">sbaA</name>
    <name type="synonym">tsu</name>
    <name type="ordered locus">b3783</name>
    <name type="ordered locus">JW3756</name>
</gene>
<feature type="chain" id="PRO_0000188962" description="Transcription termination factor Rho">
    <location>
        <begin position="1"/>
        <end position="419"/>
    </location>
</feature>
<feature type="domain" description="Rho RNA-BD" evidence="2">
    <location>
        <begin position="48"/>
        <end position="123"/>
    </location>
</feature>
<feature type="region of interest" description="RNA-binding 1">
    <location>
        <begin position="61"/>
        <end position="66"/>
    </location>
</feature>
<feature type="region of interest" description="RNA-binding 1">
    <location>
        <begin position="78"/>
        <end position="80"/>
    </location>
</feature>
<feature type="region of interest" description="RNA-binding 1">
    <location>
        <begin position="108"/>
        <end position="110"/>
    </location>
</feature>
<feature type="region of interest" description="RNA-binding 2">
    <location>
        <begin position="284"/>
        <end position="288"/>
    </location>
</feature>
<feature type="binding site" evidence="1">
    <location>
        <begin position="169"/>
        <end position="174"/>
    </location>
    <ligand>
        <name>ATP</name>
        <dbReference type="ChEBI" id="CHEBI:30616"/>
    </ligand>
</feature>
<feature type="binding site">
    <location>
        <begin position="181"/>
        <end position="186"/>
    </location>
    <ligand>
        <name>ATP</name>
        <dbReference type="ChEBI" id="CHEBI:30616"/>
    </ligand>
</feature>
<feature type="binding site">
    <location>
        <position position="212"/>
    </location>
    <ligand>
        <name>ATP</name>
        <dbReference type="ChEBI" id="CHEBI:30616"/>
    </ligand>
</feature>
<feature type="site" description="RNA-binding 2">
    <location>
        <position position="326"/>
    </location>
</feature>
<feature type="mutagenesis site" description="Defective for RNA-binding." evidence="8">
    <original>F</original>
    <variation>L</variation>
    <variation>A</variation>
    <location>
        <position position="62"/>
    </location>
</feature>
<feature type="mutagenesis site" description="Defective for RNA-binding." evidence="8">
    <original>F</original>
    <variation>L</variation>
    <variation>A</variation>
    <location>
        <position position="64"/>
    </location>
</feature>
<feature type="mutagenesis site" description="Partial loss of ATPase, helicase and termination activity." evidence="8">
    <original>K</original>
    <variation>Q</variation>
    <location>
        <position position="181"/>
    </location>
</feature>
<feature type="mutagenesis site" description="Improves ATPase and helicase activity but reduced termination activity." evidence="8">
    <original>K</original>
    <variation>Q</variation>
    <location>
        <position position="184"/>
    </location>
</feature>
<feature type="mutagenesis site" description="Does not affect the kinetics of ATP hydrolysis and inhibition by bicyclomycin." evidence="9">
    <original>C</original>
    <variation>G</variation>
    <variation>S</variation>
    <location>
        <position position="202"/>
    </location>
</feature>
<feature type="mutagenesis site" description="Loss of ATPase activity, helicase and termination activity." evidence="8">
    <original>D</original>
    <variation>N</variation>
    <location>
        <position position="265"/>
    </location>
</feature>
<feature type="sequence conflict" description="In Ref. 7; AAA68985." evidence="11" ref="7">
    <original>DFFEMMKRS</original>
    <variation>EVMTPTY</variation>
    <location>
        <begin position="411"/>
        <end position="419"/>
    </location>
</feature>
<feature type="helix" evidence="12">
    <location>
        <begin position="3"/>
        <end position="7"/>
    </location>
</feature>
<feature type="helix" evidence="12">
    <location>
        <begin position="11"/>
        <end position="19"/>
    </location>
</feature>
<feature type="turn" evidence="12">
    <location>
        <begin position="20"/>
        <end position="22"/>
    </location>
</feature>
<feature type="helix" evidence="14">
    <location>
        <begin position="26"/>
        <end position="28"/>
    </location>
</feature>
<feature type="helix" evidence="12">
    <location>
        <begin position="31"/>
        <end position="44"/>
    </location>
</feature>
<feature type="strand" evidence="18">
    <location>
        <begin position="46"/>
        <end position="48"/>
    </location>
</feature>
<feature type="strand" evidence="12">
    <location>
        <begin position="49"/>
        <end position="57"/>
    </location>
</feature>
<feature type="strand" evidence="20">
    <location>
        <begin position="59"/>
        <end position="61"/>
    </location>
</feature>
<feature type="strand" evidence="12">
    <location>
        <begin position="63"/>
        <end position="66"/>
    </location>
</feature>
<feature type="helix" evidence="12">
    <location>
        <begin position="68"/>
        <end position="70"/>
    </location>
</feature>
<feature type="helix" evidence="14">
    <location>
        <begin position="75"/>
        <end position="77"/>
    </location>
</feature>
<feature type="strand" evidence="12">
    <location>
        <begin position="79"/>
        <end position="81"/>
    </location>
</feature>
<feature type="helix" evidence="12">
    <location>
        <begin position="83"/>
        <end position="88"/>
    </location>
</feature>
<feature type="strand" evidence="12">
    <location>
        <begin position="96"/>
        <end position="102"/>
    </location>
</feature>
<feature type="strand" evidence="13">
    <location>
        <begin position="105"/>
        <end position="107"/>
    </location>
</feature>
<feature type="strand" evidence="12">
    <location>
        <begin position="110"/>
        <end position="119"/>
    </location>
</feature>
<feature type="turn" evidence="23">
    <location>
        <begin position="124"/>
        <end position="127"/>
    </location>
</feature>
<feature type="helix" evidence="17">
    <location>
        <begin position="133"/>
        <end position="135"/>
    </location>
</feature>
<feature type="strand" evidence="16">
    <location>
        <begin position="138"/>
        <end position="140"/>
    </location>
</feature>
<feature type="strand" evidence="17">
    <location>
        <begin position="143"/>
        <end position="145"/>
    </location>
</feature>
<feature type="strand" evidence="19">
    <location>
        <begin position="151"/>
        <end position="153"/>
    </location>
</feature>
<feature type="helix" evidence="17">
    <location>
        <begin position="154"/>
        <end position="165"/>
    </location>
</feature>
<feature type="strand" evidence="15">
    <location>
        <begin position="169"/>
        <end position="171"/>
    </location>
</feature>
<feature type="strand" evidence="17">
    <location>
        <begin position="173"/>
        <end position="178"/>
    </location>
</feature>
<feature type="strand" evidence="22">
    <location>
        <begin position="180"/>
        <end position="182"/>
    </location>
</feature>
<feature type="helix" evidence="17">
    <location>
        <begin position="184"/>
        <end position="198"/>
    </location>
</feature>
<feature type="strand" evidence="17">
    <location>
        <begin position="202"/>
        <end position="210"/>
    </location>
</feature>
<feature type="helix" evidence="17">
    <location>
        <begin position="213"/>
        <end position="222"/>
    </location>
</feature>
<feature type="strand" evidence="17">
    <location>
        <begin position="224"/>
        <end position="230"/>
    </location>
</feature>
<feature type="helix" evidence="17">
    <location>
        <begin position="236"/>
        <end position="255"/>
    </location>
</feature>
<feature type="strand" evidence="17">
    <location>
        <begin position="259"/>
        <end position="265"/>
    </location>
</feature>
<feature type="helix" evidence="17">
    <location>
        <begin position="267"/>
        <end position="277"/>
    </location>
</feature>
<feature type="helix" evidence="23">
    <location>
        <begin position="286"/>
        <end position="288"/>
    </location>
</feature>
<feature type="turn" evidence="17">
    <location>
        <begin position="291"/>
        <end position="295"/>
    </location>
</feature>
<feature type="helix" evidence="17">
    <location>
        <begin position="296"/>
        <end position="301"/>
    </location>
</feature>
<feature type="strand" evidence="17">
    <location>
        <begin position="305"/>
        <end position="310"/>
    </location>
</feature>
<feature type="strand" evidence="17">
    <location>
        <begin position="312"/>
        <end position="320"/>
    </location>
</feature>
<feature type="strand" evidence="23">
    <location>
        <begin position="322"/>
        <end position="324"/>
    </location>
</feature>
<feature type="helix" evidence="17">
    <location>
        <begin position="326"/>
        <end position="336"/>
    </location>
</feature>
<feature type="strand" evidence="17">
    <location>
        <begin position="340"/>
        <end position="342"/>
    </location>
</feature>
<feature type="helix" evidence="17">
    <location>
        <begin position="347"/>
        <end position="351"/>
    </location>
</feature>
<feature type="turn" evidence="17">
    <location>
        <begin position="360"/>
        <end position="362"/>
    </location>
</feature>
<feature type="strand" evidence="23">
    <location>
        <begin position="364"/>
        <end position="366"/>
    </location>
</feature>
<feature type="helix" evidence="17">
    <location>
        <begin position="368"/>
        <end position="370"/>
    </location>
</feature>
<feature type="helix" evidence="17">
    <location>
        <begin position="374"/>
        <end position="387"/>
    </location>
</feature>
<feature type="strand" evidence="24">
    <location>
        <begin position="388"/>
        <end position="390"/>
    </location>
</feature>
<feature type="helix" evidence="17">
    <location>
        <begin position="392"/>
        <end position="404"/>
    </location>
</feature>
<feature type="strand" evidence="21">
    <location>
        <begin position="406"/>
        <end position="408"/>
    </location>
</feature>
<feature type="helix" evidence="17">
    <location>
        <begin position="409"/>
        <end position="415"/>
    </location>
</feature>
<protein>
    <recommendedName>
        <fullName>Transcription termination factor Rho</fullName>
        <ecNumber>3.6.4.-</ecNumber>
    </recommendedName>
    <alternativeName>
        <fullName>ATP-dependent helicase Rho</fullName>
    </alternativeName>
</protein>
<organism>
    <name type="scientific">Escherichia coli (strain K12)</name>
    <dbReference type="NCBI Taxonomy" id="83333"/>
    <lineage>
        <taxon>Bacteria</taxon>
        <taxon>Pseudomonadati</taxon>
        <taxon>Pseudomonadota</taxon>
        <taxon>Gammaproteobacteria</taxon>
        <taxon>Enterobacterales</taxon>
        <taxon>Enterobacteriaceae</taxon>
        <taxon>Escherichia</taxon>
    </lineage>
</organism>
<dbReference type="EC" id="3.6.4.-"/>
<dbReference type="EMBL" id="J01673">
    <property type="protein sequence ID" value="AAA24532.1"/>
    <property type="molecule type" value="Genomic_DNA"/>
</dbReference>
<dbReference type="EMBL" id="M87049">
    <property type="protein sequence ID" value="AAA67583.1"/>
    <property type="molecule type" value="Genomic_DNA"/>
</dbReference>
<dbReference type="EMBL" id="U00096">
    <property type="protein sequence ID" value="AAC76788.1"/>
    <property type="molecule type" value="Genomic_DNA"/>
</dbReference>
<dbReference type="EMBL" id="AP009048">
    <property type="protein sequence ID" value="BAE77515.1"/>
    <property type="molecule type" value="Genomic_DNA"/>
</dbReference>
<dbReference type="EMBL" id="M12779">
    <property type="protein sequence ID" value="AAA24695.1"/>
    <property type="molecule type" value="Genomic_DNA"/>
</dbReference>
<dbReference type="EMBL" id="S75640">
    <property type="protein sequence ID" value="AAB20841.1"/>
    <property type="molecule type" value="Genomic_DNA"/>
</dbReference>
<dbReference type="EMBL" id="L34404">
    <property type="protein sequence ID" value="AAA68985.1"/>
    <property type="molecule type" value="Genomic_DNA"/>
</dbReference>
<dbReference type="PIR" id="A03530">
    <property type="entry name" value="TWECR"/>
</dbReference>
<dbReference type="RefSeq" id="NP_418230.1">
    <property type="nucleotide sequence ID" value="NC_000913.3"/>
</dbReference>
<dbReference type="RefSeq" id="WP_001054527.1">
    <property type="nucleotide sequence ID" value="NZ_STEB01000021.1"/>
</dbReference>
<dbReference type="PDB" id="1A62">
    <property type="method" value="X-ray"/>
    <property type="resolution" value="1.55 A"/>
    <property type="chains" value="A=1-130"/>
</dbReference>
<dbReference type="PDB" id="1A63">
    <property type="method" value="NMR"/>
    <property type="chains" value="A=1-130"/>
</dbReference>
<dbReference type="PDB" id="1A8V">
    <property type="method" value="X-ray"/>
    <property type="resolution" value="2.00 A"/>
    <property type="chains" value="A/B=1-118"/>
</dbReference>
<dbReference type="PDB" id="1PV4">
    <property type="method" value="X-ray"/>
    <property type="resolution" value="3.00 A"/>
    <property type="chains" value="A/B/C/D/E/F=1-419"/>
</dbReference>
<dbReference type="PDB" id="1PVO">
    <property type="method" value="X-ray"/>
    <property type="resolution" value="3.00 A"/>
    <property type="chains" value="A/B/C/D/E/F=1-419"/>
</dbReference>
<dbReference type="PDB" id="1XPO">
    <property type="method" value="X-ray"/>
    <property type="resolution" value="3.15 A"/>
    <property type="chains" value="A/B/C/D/E/F=1-419"/>
</dbReference>
<dbReference type="PDB" id="1XPR">
    <property type="method" value="X-ray"/>
    <property type="resolution" value="3.15 A"/>
    <property type="chains" value="A/B/C/D/E/F=1-419"/>
</dbReference>
<dbReference type="PDB" id="1XPU">
    <property type="method" value="X-ray"/>
    <property type="resolution" value="3.05 A"/>
    <property type="chains" value="A/B/C/D/E/F=1-419"/>
</dbReference>
<dbReference type="PDB" id="2A8V">
    <property type="method" value="X-ray"/>
    <property type="resolution" value="2.40 A"/>
    <property type="chains" value="A/B/C=1-118"/>
</dbReference>
<dbReference type="PDB" id="2HT1">
    <property type="method" value="X-ray"/>
    <property type="resolution" value="3.51 A"/>
    <property type="chains" value="A/B=1-411"/>
</dbReference>
<dbReference type="PDB" id="3ICE">
    <property type="method" value="X-ray"/>
    <property type="resolution" value="2.80 A"/>
    <property type="chains" value="A/B/C/D/E/F=1-419"/>
</dbReference>
<dbReference type="PDB" id="5JJI">
    <property type="method" value="X-ray"/>
    <property type="resolution" value="2.60 A"/>
    <property type="chains" value="A/B/C/D/E/F=2-417"/>
</dbReference>
<dbReference type="PDB" id="5JJK">
    <property type="method" value="X-ray"/>
    <property type="resolution" value="3.15 A"/>
    <property type="chains" value="A/B/C/D/E/F=2-417"/>
</dbReference>
<dbReference type="PDB" id="5JJL">
    <property type="method" value="X-ray"/>
    <property type="resolution" value="3.20 A"/>
    <property type="chains" value="A/B/C/D/E/F=2-417"/>
</dbReference>
<dbReference type="PDB" id="6DUQ">
    <property type="method" value="X-ray"/>
    <property type="resolution" value="3.70 A"/>
    <property type="chains" value="A/B/C/D/E/F/G/H/I/J/K/L=1-419"/>
</dbReference>
<dbReference type="PDB" id="6WA8">
    <property type="method" value="X-ray"/>
    <property type="resolution" value="3.30 A"/>
    <property type="chains" value="A/B/C/D/E/F=1-419"/>
</dbReference>
<dbReference type="PDB" id="6XAS">
    <property type="method" value="EM"/>
    <property type="resolution" value="3.80 A"/>
    <property type="chains" value="A/B/C/D/E/F=1-419"/>
</dbReference>
<dbReference type="PDB" id="6XAV">
    <property type="method" value="EM"/>
    <property type="resolution" value="7.70 A"/>
    <property type="chains" value="A/B/C/D/E/F=1-419"/>
</dbReference>
<dbReference type="PDB" id="6Z9P">
    <property type="method" value="EM"/>
    <property type="resolution" value="3.90 A"/>
    <property type="chains" value="a/b/c/d/e/f=1-419"/>
</dbReference>
<dbReference type="PDB" id="6Z9Q">
    <property type="method" value="EM"/>
    <property type="resolution" value="5.70 A"/>
    <property type="chains" value="a/b/c/d/e/f=1-419"/>
</dbReference>
<dbReference type="PDB" id="6Z9R">
    <property type="method" value="EM"/>
    <property type="resolution" value="4.10 A"/>
    <property type="chains" value="a/b/c/d/e/f=1-419"/>
</dbReference>
<dbReference type="PDB" id="6Z9S">
    <property type="method" value="EM"/>
    <property type="resolution" value="4.40 A"/>
    <property type="chains" value="a/b/c/d/e/f=1-419"/>
</dbReference>
<dbReference type="PDB" id="6Z9T">
    <property type="method" value="EM"/>
    <property type="resolution" value="4.10 A"/>
    <property type="chains" value="a/b/c/d/e/f=1-419"/>
</dbReference>
<dbReference type="PDB" id="7ADB">
    <property type="method" value="EM"/>
    <property type="resolution" value="4.40 A"/>
    <property type="chains" value="a/b/c/d/e/f=1-419"/>
</dbReference>
<dbReference type="PDB" id="7ADC">
    <property type="method" value="EM"/>
    <property type="resolution" value="4.00 A"/>
    <property type="chains" value="a/b/c/d/e/f=1-419"/>
</dbReference>
<dbReference type="PDB" id="7ADD">
    <property type="method" value="EM"/>
    <property type="resolution" value="4.30 A"/>
    <property type="chains" value="a/b/c/d/e/f=1-419"/>
</dbReference>
<dbReference type="PDB" id="7ADE">
    <property type="method" value="EM"/>
    <property type="resolution" value="4.20 A"/>
    <property type="chains" value="a/b/c/d/e/f=1-419"/>
</dbReference>
<dbReference type="PDB" id="7X2R">
    <property type="method" value="X-ray"/>
    <property type="resolution" value="4.40 A"/>
    <property type="chains" value="A/B/C/D/E/F=1-419"/>
</dbReference>
<dbReference type="PDB" id="8E3H">
    <property type="method" value="EM"/>
    <property type="resolution" value="6.50 A"/>
    <property type="chains" value="a/b/c/d/e/f=1-419"/>
</dbReference>
<dbReference type="PDB" id="8E5L">
    <property type="method" value="EM"/>
    <property type="resolution" value="4.20 A"/>
    <property type="chains" value="a/b/c/d/e/f=1-419"/>
</dbReference>
<dbReference type="PDB" id="8E5P">
    <property type="method" value="EM"/>
    <property type="resolution" value="4.40 A"/>
    <property type="chains" value="a/b/c/d/e/f=1-419"/>
</dbReference>
<dbReference type="PDB" id="8E6W">
    <property type="method" value="EM"/>
    <property type="resolution" value="4.27 A"/>
    <property type="chains" value="a/b/c/d/e/f=1-419"/>
</dbReference>
<dbReference type="PDB" id="8E70">
    <property type="method" value="EM"/>
    <property type="resolution" value="4.10 A"/>
    <property type="chains" value="a/b/c/d/e/f=1-419"/>
</dbReference>
<dbReference type="PDB" id="8PEU">
    <property type="method" value="EM"/>
    <property type="resolution" value="3.70 A"/>
    <property type="chains" value="A/B/C/D/E/F/I/J/K/L/M/N=1-419"/>
</dbReference>
<dbReference type="PDB" id="8PEW">
    <property type="method" value="EM"/>
    <property type="resolution" value="4.30 A"/>
    <property type="chains" value="A/B/C/D/E/F/G/H/I/J/K/L/M/N/O/P/X/Y=1-419"/>
</dbReference>
<dbReference type="PDB" id="8PEX">
    <property type="method" value="EM"/>
    <property type="resolution" value="3.10 A"/>
    <property type="chains" value="A/B/C/D/E/F/I/J/K/L/M/N=1-419"/>
</dbReference>
<dbReference type="PDB" id="8PEY">
    <property type="method" value="EM"/>
    <property type="resolution" value="3.00 A"/>
    <property type="chains" value="A/B/C/D/E/F/G/I/J/K/L/M/N=1-419"/>
</dbReference>
<dbReference type="PDB" id="8PTG">
    <property type="method" value="EM"/>
    <property type="resolution" value="2.90 A"/>
    <property type="chains" value="A/B/C/D/E/F=1-419"/>
</dbReference>
<dbReference type="PDB" id="8PTM">
    <property type="method" value="EM"/>
    <property type="resolution" value="2.90 A"/>
    <property type="chains" value="A/B/C/D/E/F=1-419"/>
</dbReference>
<dbReference type="PDB" id="8PTN">
    <property type="method" value="EM"/>
    <property type="resolution" value="3.30 A"/>
    <property type="chains" value="A/B/C/D/E/F=1-419"/>
</dbReference>
<dbReference type="PDB" id="8PTO">
    <property type="method" value="EM"/>
    <property type="resolution" value="2.70 A"/>
    <property type="chains" value="A/B/C/D/E=1-419"/>
</dbReference>
<dbReference type="PDB" id="8PTP">
    <property type="method" value="EM"/>
    <property type="resolution" value="3.00 A"/>
    <property type="chains" value="A/B/C/D/E=1-419"/>
</dbReference>
<dbReference type="PDB" id="8Q3N">
    <property type="method" value="EM"/>
    <property type="resolution" value="2.63 A"/>
    <property type="chains" value="A/B/C/D/E/F=1-419"/>
</dbReference>
<dbReference type="PDB" id="8Q3O">
    <property type="method" value="EM"/>
    <property type="resolution" value="3.00 A"/>
    <property type="chains" value="A/B/C/D/E/F=1-419"/>
</dbReference>
<dbReference type="PDB" id="8Q3P">
    <property type="method" value="EM"/>
    <property type="resolution" value="3.50 A"/>
    <property type="chains" value="a/b/c/d/e/f/g/h/i/j/k/l/m/n/o/p/q/r=1-419"/>
</dbReference>
<dbReference type="PDB" id="8Q3Q">
    <property type="method" value="EM"/>
    <property type="resolution" value="3.30 A"/>
    <property type="chains" value="a/b/c/d/e/f/g/h/i/j/k/l/m/n/o/p/q/r=1-419"/>
</dbReference>
<dbReference type="PDB" id="8W8D">
    <property type="method" value="EM"/>
    <property type="resolution" value="2.80 A"/>
    <property type="chains" value="A/B/C/D/E/F=1-419"/>
</dbReference>
<dbReference type="PDB" id="9GCS">
    <property type="method" value="EM"/>
    <property type="resolution" value="3.90 A"/>
    <property type="chains" value="B/C/D/E/F/G/J/K/L/M/N/O=1-419"/>
</dbReference>
<dbReference type="PDB" id="9GCT">
    <property type="method" value="EM"/>
    <property type="resolution" value="3.70 A"/>
    <property type="chains" value="A/B/C/D/E/F/G/H/J/K/L/M/N/O/P/Y=1-419"/>
</dbReference>
<dbReference type="PDB" id="9GCU">
    <property type="method" value="EM"/>
    <property type="resolution" value="2.80 A"/>
    <property type="chains" value="A/B/C/D/E/F=1-419"/>
</dbReference>
<dbReference type="PDBsum" id="1A62"/>
<dbReference type="PDBsum" id="1A63"/>
<dbReference type="PDBsum" id="1A8V"/>
<dbReference type="PDBsum" id="1PV4"/>
<dbReference type="PDBsum" id="1PVO"/>
<dbReference type="PDBsum" id="1XPO"/>
<dbReference type="PDBsum" id="1XPR"/>
<dbReference type="PDBsum" id="1XPU"/>
<dbReference type="PDBsum" id="2A8V"/>
<dbReference type="PDBsum" id="2HT1"/>
<dbReference type="PDBsum" id="3ICE"/>
<dbReference type="PDBsum" id="5JJI"/>
<dbReference type="PDBsum" id="5JJK"/>
<dbReference type="PDBsum" id="5JJL"/>
<dbReference type="PDBsum" id="6DUQ"/>
<dbReference type="PDBsum" id="6WA8"/>
<dbReference type="PDBsum" id="6XAS"/>
<dbReference type="PDBsum" id="6XAV"/>
<dbReference type="PDBsum" id="6Z9P"/>
<dbReference type="PDBsum" id="6Z9Q"/>
<dbReference type="PDBsum" id="6Z9R"/>
<dbReference type="PDBsum" id="6Z9S"/>
<dbReference type="PDBsum" id="6Z9T"/>
<dbReference type="PDBsum" id="7ADB"/>
<dbReference type="PDBsum" id="7ADC"/>
<dbReference type="PDBsum" id="7ADD"/>
<dbReference type="PDBsum" id="7ADE"/>
<dbReference type="PDBsum" id="7X2R"/>
<dbReference type="PDBsum" id="8E3H"/>
<dbReference type="PDBsum" id="8E5L"/>
<dbReference type="PDBsum" id="8E5P"/>
<dbReference type="PDBsum" id="8E6W"/>
<dbReference type="PDBsum" id="8E70"/>
<dbReference type="PDBsum" id="8PEU"/>
<dbReference type="PDBsum" id="8PEW"/>
<dbReference type="PDBsum" id="8PEX"/>
<dbReference type="PDBsum" id="8PEY"/>
<dbReference type="PDBsum" id="8PTG"/>
<dbReference type="PDBsum" id="8PTM"/>
<dbReference type="PDBsum" id="8PTN"/>
<dbReference type="PDBsum" id="8PTO"/>
<dbReference type="PDBsum" id="8PTP"/>
<dbReference type="PDBsum" id="8Q3N"/>
<dbReference type="PDBsum" id="8Q3O"/>
<dbReference type="PDBsum" id="8Q3P"/>
<dbReference type="PDBsum" id="8Q3Q"/>
<dbReference type="PDBsum" id="8W8D"/>
<dbReference type="PDBsum" id="9GCS"/>
<dbReference type="PDBsum" id="9GCT"/>
<dbReference type="PDBsum" id="9GCU"/>
<dbReference type="EMDB" id="EMD-11722"/>
<dbReference type="EMDB" id="EMD-11723"/>
<dbReference type="EMDB" id="EMD-11724"/>
<dbReference type="EMDB" id="EMD-17640"/>
<dbReference type="EMDB" id="EMD-17641"/>
<dbReference type="EMDB" id="EMD-17870"/>
<dbReference type="EMDB" id="EMD-17874"/>
<dbReference type="EMDB" id="EMD-17875"/>
<dbReference type="EMDB" id="EMD-17876"/>
<dbReference type="EMDB" id="EMD-17877"/>
<dbReference type="EMDB" id="EMD-18132"/>
<dbReference type="EMDB" id="EMD-18133"/>
<dbReference type="EMDB" id="EMD-22114"/>
<dbReference type="EMDB" id="EMD-22115"/>
<dbReference type="EMDB" id="EMD-51235"/>
<dbReference type="EMDB" id="EMD-51236"/>
<dbReference type="EMDB" id="EMD-51237"/>
<dbReference type="SMR" id="P0AG30"/>
<dbReference type="BioGRID" id="4259697">
    <property type="interactions" value="26"/>
</dbReference>
<dbReference type="BioGRID" id="852595">
    <property type="interactions" value="4"/>
</dbReference>
<dbReference type="DIP" id="DIP-35363N"/>
<dbReference type="FunCoup" id="P0AG30">
    <property type="interactions" value="882"/>
</dbReference>
<dbReference type="IntAct" id="P0AG30">
    <property type="interactions" value="67"/>
</dbReference>
<dbReference type="MINT" id="P0AG30"/>
<dbReference type="STRING" id="511145.b3783"/>
<dbReference type="jPOST" id="P0AG30"/>
<dbReference type="PaxDb" id="511145-b3783"/>
<dbReference type="EnsemblBacteria" id="AAC76788">
    <property type="protein sequence ID" value="AAC76788"/>
    <property type="gene ID" value="b3783"/>
</dbReference>
<dbReference type="GeneID" id="93778161"/>
<dbReference type="GeneID" id="948297"/>
<dbReference type="KEGG" id="ecj:JW3756"/>
<dbReference type="KEGG" id="eco:b3783"/>
<dbReference type="KEGG" id="ecoc:C3026_20480"/>
<dbReference type="PATRIC" id="fig|511145.12.peg.3898"/>
<dbReference type="EchoBASE" id="EB0838"/>
<dbReference type="eggNOG" id="COG1158">
    <property type="taxonomic scope" value="Bacteria"/>
</dbReference>
<dbReference type="HOGENOM" id="CLU_016377_4_3_6"/>
<dbReference type="InParanoid" id="P0AG30"/>
<dbReference type="OMA" id="LCRAHNN"/>
<dbReference type="OrthoDB" id="9805197at2"/>
<dbReference type="PhylomeDB" id="P0AG30"/>
<dbReference type="BioCyc" id="EcoCyc:EG10845-MONOMER"/>
<dbReference type="BRENDA" id="3.6.1.3">
    <property type="organism ID" value="2026"/>
</dbReference>
<dbReference type="SABIO-RK" id="P0AG30"/>
<dbReference type="EvolutionaryTrace" id="P0AG30"/>
<dbReference type="PRO" id="PR:P0AG30"/>
<dbReference type="Proteomes" id="UP000000625">
    <property type="component" value="Chromosome"/>
</dbReference>
<dbReference type="GO" id="GO:0005829">
    <property type="term" value="C:cytosol"/>
    <property type="evidence" value="ECO:0000314"/>
    <property type="project" value="EcoCyc"/>
</dbReference>
<dbReference type="GO" id="GO:0016020">
    <property type="term" value="C:membrane"/>
    <property type="evidence" value="ECO:0007005"/>
    <property type="project" value="UniProtKB"/>
</dbReference>
<dbReference type="GO" id="GO:0005524">
    <property type="term" value="F:ATP binding"/>
    <property type="evidence" value="ECO:0007669"/>
    <property type="project" value="UniProtKB-UniRule"/>
</dbReference>
<dbReference type="GO" id="GO:0016887">
    <property type="term" value="F:ATP hydrolysis activity"/>
    <property type="evidence" value="ECO:0007669"/>
    <property type="project" value="InterPro"/>
</dbReference>
<dbReference type="GO" id="GO:0008186">
    <property type="term" value="F:ATP-dependent activity, acting on RNA"/>
    <property type="evidence" value="ECO:0007669"/>
    <property type="project" value="InterPro"/>
</dbReference>
<dbReference type="GO" id="GO:0004386">
    <property type="term" value="F:helicase activity"/>
    <property type="evidence" value="ECO:0007669"/>
    <property type="project" value="UniProtKB-UniRule"/>
</dbReference>
<dbReference type="GO" id="GO:0042802">
    <property type="term" value="F:identical protein binding"/>
    <property type="evidence" value="ECO:0000353"/>
    <property type="project" value="IntAct"/>
</dbReference>
<dbReference type="GO" id="GO:0003723">
    <property type="term" value="F:RNA binding"/>
    <property type="evidence" value="ECO:0000314"/>
    <property type="project" value="EcoCyc"/>
</dbReference>
<dbReference type="GO" id="GO:0006353">
    <property type="term" value="P:DNA-templated transcription termination"/>
    <property type="evidence" value="ECO:0000314"/>
    <property type="project" value="EcoCyc"/>
</dbReference>
<dbReference type="CDD" id="cd04459">
    <property type="entry name" value="Rho_CSD"/>
    <property type="match status" value="1"/>
</dbReference>
<dbReference type="CDD" id="cd01128">
    <property type="entry name" value="rho_factor_C"/>
    <property type="match status" value="1"/>
</dbReference>
<dbReference type="FunFam" id="1.10.720.10:FF:000001">
    <property type="entry name" value="Transcription termination factor Rho"/>
    <property type="match status" value="1"/>
</dbReference>
<dbReference type="FunFam" id="2.40.50.140:FF:000010">
    <property type="entry name" value="Transcription termination factor Rho"/>
    <property type="match status" value="1"/>
</dbReference>
<dbReference type="FunFam" id="3.40.50.300:FF:000072">
    <property type="entry name" value="Transcription termination factor Rho"/>
    <property type="match status" value="1"/>
</dbReference>
<dbReference type="Gene3D" id="1.10.720.10">
    <property type="match status" value="1"/>
</dbReference>
<dbReference type="Gene3D" id="2.40.50.140">
    <property type="entry name" value="Nucleic acid-binding proteins"/>
    <property type="match status" value="1"/>
</dbReference>
<dbReference type="Gene3D" id="3.40.50.300">
    <property type="entry name" value="P-loop containing nucleotide triphosphate hydrolases"/>
    <property type="match status" value="1"/>
</dbReference>
<dbReference type="HAMAP" id="MF_01884">
    <property type="entry name" value="Rho"/>
    <property type="match status" value="1"/>
</dbReference>
<dbReference type="InterPro" id="IPR003593">
    <property type="entry name" value="AAA+_ATPase"/>
</dbReference>
<dbReference type="InterPro" id="IPR000194">
    <property type="entry name" value="ATPase_F1/V1/A1_a/bsu_nucl-bd"/>
</dbReference>
<dbReference type="InterPro" id="IPR011129">
    <property type="entry name" value="CSD"/>
</dbReference>
<dbReference type="InterPro" id="IPR012340">
    <property type="entry name" value="NA-bd_OB-fold"/>
</dbReference>
<dbReference type="InterPro" id="IPR027417">
    <property type="entry name" value="P-loop_NTPase"/>
</dbReference>
<dbReference type="InterPro" id="IPR011112">
    <property type="entry name" value="Rho-like_N"/>
</dbReference>
<dbReference type="InterPro" id="IPR041703">
    <property type="entry name" value="Rho_factor_ATP-bd"/>
</dbReference>
<dbReference type="InterPro" id="IPR036269">
    <property type="entry name" value="Rho_N_sf"/>
</dbReference>
<dbReference type="InterPro" id="IPR011113">
    <property type="entry name" value="Rho_RNA-bd"/>
</dbReference>
<dbReference type="InterPro" id="IPR004665">
    <property type="entry name" value="Term_rho"/>
</dbReference>
<dbReference type="NCBIfam" id="NF006886">
    <property type="entry name" value="PRK09376.1"/>
    <property type="match status" value="1"/>
</dbReference>
<dbReference type="NCBIfam" id="TIGR00767">
    <property type="entry name" value="rho"/>
    <property type="match status" value="1"/>
</dbReference>
<dbReference type="PANTHER" id="PTHR46425">
    <property type="entry name" value="TRANSCRIPTION TERMINATION FACTOR RHO"/>
    <property type="match status" value="1"/>
</dbReference>
<dbReference type="PANTHER" id="PTHR46425:SF1">
    <property type="entry name" value="TRANSCRIPTION TERMINATION FACTOR RHO"/>
    <property type="match status" value="1"/>
</dbReference>
<dbReference type="Pfam" id="PF00006">
    <property type="entry name" value="ATP-synt_ab"/>
    <property type="match status" value="1"/>
</dbReference>
<dbReference type="Pfam" id="PF07498">
    <property type="entry name" value="Rho_N"/>
    <property type="match status" value="1"/>
</dbReference>
<dbReference type="Pfam" id="PF07497">
    <property type="entry name" value="Rho_RNA_bind"/>
    <property type="match status" value="1"/>
</dbReference>
<dbReference type="SMART" id="SM00382">
    <property type="entry name" value="AAA"/>
    <property type="match status" value="1"/>
</dbReference>
<dbReference type="SMART" id="SM00357">
    <property type="entry name" value="CSP"/>
    <property type="match status" value="1"/>
</dbReference>
<dbReference type="SMART" id="SM00959">
    <property type="entry name" value="Rho_N"/>
    <property type="match status" value="1"/>
</dbReference>
<dbReference type="SUPFAM" id="SSF50249">
    <property type="entry name" value="Nucleic acid-binding proteins"/>
    <property type="match status" value="1"/>
</dbReference>
<dbReference type="SUPFAM" id="SSF52540">
    <property type="entry name" value="P-loop containing nucleoside triphosphate hydrolases"/>
    <property type="match status" value="1"/>
</dbReference>
<dbReference type="SUPFAM" id="SSF68912">
    <property type="entry name" value="Rho N-terminal domain-like"/>
    <property type="match status" value="1"/>
</dbReference>
<dbReference type="PROSITE" id="PS51856">
    <property type="entry name" value="RHO_RNA_BD"/>
    <property type="match status" value="1"/>
</dbReference>
<proteinExistence type="evidence at protein level"/>
<name>RHO_ECOLI</name>
<accession>P0AG30</accession>
<accession>P03002</accession>
<accession>Q2M891</accession>
<accession>Q48357</accession>